<feature type="chain" id="PRO_0000396962" description="Proteasome-associated ATPase">
    <location>
        <begin position="1"/>
        <end position="560"/>
    </location>
</feature>
<feature type="region of interest" description="Disordered" evidence="2">
    <location>
        <begin position="1"/>
        <end position="21"/>
    </location>
</feature>
<feature type="region of interest" description="Docks into pockets in the proteasome alpha-ring" evidence="1">
    <location>
        <begin position="559"/>
        <end position="560"/>
    </location>
</feature>
<feature type="coiled-coil region" evidence="1">
    <location>
        <begin position="16"/>
        <end position="55"/>
    </location>
</feature>
<feature type="compositionally biased region" description="Basic and acidic residues" evidence="2">
    <location>
        <begin position="1"/>
        <end position="19"/>
    </location>
</feature>
<feature type="binding site" evidence="1">
    <location>
        <begin position="237"/>
        <end position="242"/>
    </location>
    <ligand>
        <name>ATP</name>
        <dbReference type="ChEBI" id="CHEBI:30616"/>
    </ligand>
</feature>
<sequence length="560" mass="60970">MSQQHDDRRPPDTADRDLARQATSLAEKNERLTAALTAARAQLVEMKAQLEEVSKPPGSYAYFAAAHADGTADVYSAGRKLRLGVAPSVPLASLRPGQEVQLNEAMTVVAAGGYEPVGEVVTVKELIGSDRALVVGRADEERVVRLAGRLIGENVRVGDALTIEPRTGFVFERIPRSEVEDLVLEEVPDVAYADIGGLSSQIEAIRDAVELPFLHPDLFREHGLKPPKGLLLYGPPGCGKTLIAKAVATSLAHTAARRDADGEPAELPDGAARSYFLNVKGPELLNKFVGETERHIRLIFARARERASQGIPVVVFFDEMESLFRTRGTGVSSDVETTIVPQLLAEIDGVERLDNVIVIGASNREDMIDPAILRPGRLDVKIKVERPDAEAARDIFSKYLVADLPIHPDDLAEYGNDAATTVAAMIDRAVGRMYSTAPENEFLEVTYASGDKEVLYFKDFNSGAMIQNIVDRAKKHAIKDLLAGGRRGIRVDHVLEACVTEFKENEDLPNTTNPDDWARISGKKGERIVFIRTIVQKKSGETVGSVARAVENVATPGQYL</sequence>
<keyword id="KW-0067">ATP-binding</keyword>
<keyword id="KW-0143">Chaperone</keyword>
<keyword id="KW-0175">Coiled coil</keyword>
<keyword id="KW-0547">Nucleotide-binding</keyword>
<keyword id="KW-0647">Proteasome</keyword>
<keyword id="KW-1185">Reference proteome</keyword>
<dbReference type="EMBL" id="CP001618">
    <property type="protein sequence ID" value="ACQ80493.1"/>
    <property type="molecule type" value="Genomic_DNA"/>
</dbReference>
<dbReference type="RefSeq" id="WP_015882733.1">
    <property type="nucleotide sequence ID" value="NC_012669.1"/>
</dbReference>
<dbReference type="SMR" id="C5BVA6"/>
<dbReference type="STRING" id="471853.Bcav_2242"/>
<dbReference type="KEGG" id="bcv:Bcav_2242"/>
<dbReference type="eggNOG" id="COG1222">
    <property type="taxonomic scope" value="Bacteria"/>
</dbReference>
<dbReference type="HOGENOM" id="CLU_036054_0_0_11"/>
<dbReference type="OrthoDB" id="9809379at2"/>
<dbReference type="UniPathway" id="UPA00997"/>
<dbReference type="Proteomes" id="UP000007962">
    <property type="component" value="Chromosome"/>
</dbReference>
<dbReference type="GO" id="GO:0000502">
    <property type="term" value="C:proteasome complex"/>
    <property type="evidence" value="ECO:0007669"/>
    <property type="project" value="UniProtKB-KW"/>
</dbReference>
<dbReference type="GO" id="GO:0005524">
    <property type="term" value="F:ATP binding"/>
    <property type="evidence" value="ECO:0007669"/>
    <property type="project" value="UniProtKB-UniRule"/>
</dbReference>
<dbReference type="GO" id="GO:0016887">
    <property type="term" value="F:ATP hydrolysis activity"/>
    <property type="evidence" value="ECO:0007669"/>
    <property type="project" value="UniProtKB-UniRule"/>
</dbReference>
<dbReference type="GO" id="GO:0019941">
    <property type="term" value="P:modification-dependent protein catabolic process"/>
    <property type="evidence" value="ECO:0007669"/>
    <property type="project" value="InterPro"/>
</dbReference>
<dbReference type="GO" id="GO:0010498">
    <property type="term" value="P:proteasomal protein catabolic process"/>
    <property type="evidence" value="ECO:0007669"/>
    <property type="project" value="InterPro"/>
</dbReference>
<dbReference type="FunFam" id="3.40.50.300:FF:001025">
    <property type="entry name" value="ATPase family, AAA domain-containing 2B"/>
    <property type="match status" value="1"/>
</dbReference>
<dbReference type="Gene3D" id="1.10.8.60">
    <property type="match status" value="1"/>
</dbReference>
<dbReference type="Gene3D" id="1.20.5.170">
    <property type="match status" value="1"/>
</dbReference>
<dbReference type="Gene3D" id="2.40.50.140">
    <property type="entry name" value="Nucleic acid-binding proteins"/>
    <property type="match status" value="2"/>
</dbReference>
<dbReference type="Gene3D" id="3.40.50.300">
    <property type="entry name" value="P-loop containing nucleotide triphosphate hydrolases"/>
    <property type="match status" value="1"/>
</dbReference>
<dbReference type="HAMAP" id="MF_02112">
    <property type="entry name" value="ARC_ATPase"/>
    <property type="match status" value="1"/>
</dbReference>
<dbReference type="InterPro" id="IPR003593">
    <property type="entry name" value="AAA+_ATPase"/>
</dbReference>
<dbReference type="InterPro" id="IPR050168">
    <property type="entry name" value="AAA_ATPase_domain"/>
</dbReference>
<dbReference type="InterPro" id="IPR003959">
    <property type="entry name" value="ATPase_AAA_core"/>
</dbReference>
<dbReference type="InterPro" id="IPR003960">
    <property type="entry name" value="ATPase_AAA_CS"/>
</dbReference>
<dbReference type="InterPro" id="IPR012340">
    <property type="entry name" value="NA-bd_OB-fold"/>
</dbReference>
<dbReference type="InterPro" id="IPR027417">
    <property type="entry name" value="P-loop_NTPase"/>
</dbReference>
<dbReference type="InterPro" id="IPR032501">
    <property type="entry name" value="Prot_ATP_ID_OB_2nd"/>
</dbReference>
<dbReference type="InterPro" id="IPR041626">
    <property type="entry name" value="Prot_ATP_ID_OB_N"/>
</dbReference>
<dbReference type="InterPro" id="IPR022482">
    <property type="entry name" value="Proteasome_ATPase"/>
</dbReference>
<dbReference type="NCBIfam" id="TIGR03689">
    <property type="entry name" value="pup_AAA"/>
    <property type="match status" value="1"/>
</dbReference>
<dbReference type="PANTHER" id="PTHR23077">
    <property type="entry name" value="AAA-FAMILY ATPASE"/>
    <property type="match status" value="1"/>
</dbReference>
<dbReference type="PANTHER" id="PTHR23077:SF144">
    <property type="entry name" value="PROTEASOME-ASSOCIATED ATPASE"/>
    <property type="match status" value="1"/>
</dbReference>
<dbReference type="Pfam" id="PF00004">
    <property type="entry name" value="AAA"/>
    <property type="match status" value="1"/>
</dbReference>
<dbReference type="Pfam" id="PF16450">
    <property type="entry name" value="Prot_ATP_ID_OB_C"/>
    <property type="match status" value="1"/>
</dbReference>
<dbReference type="Pfam" id="PF17758">
    <property type="entry name" value="Prot_ATP_ID_OB_N"/>
    <property type="match status" value="1"/>
</dbReference>
<dbReference type="SMART" id="SM00382">
    <property type="entry name" value="AAA"/>
    <property type="match status" value="1"/>
</dbReference>
<dbReference type="SUPFAM" id="SSF52540">
    <property type="entry name" value="P-loop containing nucleoside triphosphate hydrolases"/>
    <property type="match status" value="1"/>
</dbReference>
<dbReference type="PROSITE" id="PS00674">
    <property type="entry name" value="AAA"/>
    <property type="match status" value="1"/>
</dbReference>
<evidence type="ECO:0000255" key="1">
    <source>
        <dbReference type="HAMAP-Rule" id="MF_02112"/>
    </source>
</evidence>
<evidence type="ECO:0000256" key="2">
    <source>
        <dbReference type="SAM" id="MobiDB-lite"/>
    </source>
</evidence>
<protein>
    <recommendedName>
        <fullName evidence="1">Proteasome-associated ATPase</fullName>
    </recommendedName>
    <alternativeName>
        <fullName evidence="1">AAA ATPase forming ring-shaped complexes</fullName>
        <shortName evidence="1">ARC</shortName>
    </alternativeName>
    <alternativeName>
        <fullName evidence="1">Proteasomal ATPase</fullName>
    </alternativeName>
</protein>
<accession>C5BVA6</accession>
<organism>
    <name type="scientific">Beutenbergia cavernae (strain ATCC BAA-8 / DSM 12333 / CCUG 43141 / JCM 11478 / NBRC 16432 / NCIMB 13614 / HKI 0122)</name>
    <dbReference type="NCBI Taxonomy" id="471853"/>
    <lineage>
        <taxon>Bacteria</taxon>
        <taxon>Bacillati</taxon>
        <taxon>Actinomycetota</taxon>
        <taxon>Actinomycetes</taxon>
        <taxon>Micrococcales</taxon>
        <taxon>Beutenbergiaceae</taxon>
        <taxon>Beutenbergia</taxon>
    </lineage>
</organism>
<comment type="function">
    <text evidence="1">ATPase which is responsible for recognizing, binding, unfolding and translocation of pupylated proteins into the bacterial 20S proteasome core particle. May be essential for opening the gate of the 20S proteasome via an interaction with its C-terminus, thereby allowing substrate entry and access to the site of proteolysis. Thus, the C-termini of the proteasomal ATPase may function like a 'key in a lock' to induce gate opening and therefore regulate proteolysis.</text>
</comment>
<comment type="pathway">
    <text evidence="1">Protein degradation; proteasomal Pup-dependent pathway.</text>
</comment>
<comment type="subunit">
    <text evidence="1">Homohexamer. Assembles into a hexameric ring structure that caps the 20S proteasome core. Strongly interacts with the prokaryotic ubiquitin-like protein Pup through a hydrophobic interface; the interacting region of ARC lies in its N-terminal coiled-coil domain. There is one Pup binding site per ARC hexamer ring. Upon ATP-binding, the C-terminus of ARC interacts with the alpha-rings of the proteasome core, possibly by binding to the intersubunit pockets.</text>
</comment>
<comment type="domain">
    <text evidence="1">Consists of three main regions, an N-terminal coiled-coil domain that binds to protein Pup and functions as a docking station, an interdomain involved in ARC hexamerization, and a C-terminal ATPase domain of the AAA type.</text>
</comment>
<comment type="similarity">
    <text evidence="1">Belongs to the AAA ATPase family.</text>
</comment>
<name>ARC_BEUC1</name>
<reference key="1">
    <citation type="journal article" date="2009" name="Stand. Genomic Sci.">
        <title>Complete genome sequence of Beutenbergia cavernae type strain (HKI 0122).</title>
        <authorList>
            <person name="Land M."/>
            <person name="Pukall R."/>
            <person name="Abt B."/>
            <person name="Goker M."/>
            <person name="Rohde M."/>
            <person name="Glavina Del Rio T."/>
            <person name="Tice H."/>
            <person name="Copeland A."/>
            <person name="Cheng J.F."/>
            <person name="Lucas S."/>
            <person name="Chen F."/>
            <person name="Nolan M."/>
            <person name="Bruce D."/>
            <person name="Goodwin L."/>
            <person name="Pitluck S."/>
            <person name="Ivanova N."/>
            <person name="Mavromatis K."/>
            <person name="Ovchinnikova G."/>
            <person name="Pati A."/>
            <person name="Chen A."/>
            <person name="Palaniappan K."/>
            <person name="Hauser L."/>
            <person name="Chang Y.J."/>
            <person name="Jefferies C.C."/>
            <person name="Saunders E."/>
            <person name="Brettin T."/>
            <person name="Detter J.C."/>
            <person name="Han C."/>
            <person name="Chain P."/>
            <person name="Bristow J."/>
            <person name="Eisen J.A."/>
            <person name="Markowitz V."/>
            <person name="Hugenholtz P."/>
            <person name="Kyrpides N.C."/>
            <person name="Klenk H.P."/>
            <person name="Lapidus A."/>
        </authorList>
    </citation>
    <scope>NUCLEOTIDE SEQUENCE [LARGE SCALE GENOMIC DNA]</scope>
    <source>
        <strain>ATCC BAA-8 / DSM 12333 / CCUG 43141 / JCM 11478 / NBRC 16432 / NCIMB 13614 / HKI 0122</strain>
    </source>
</reference>
<gene>
    <name evidence="1" type="primary">arc</name>
    <name type="ordered locus">Bcav_2242</name>
</gene>
<proteinExistence type="inferred from homology"/>